<sequence length="139" mass="15310">MPTINQLVKKPRTSKVKKSTAPALNKGYNSHKKKATDLASPQKRGVCTRVGTMTPKKPNSALRKYARVRLSNNIEVNAYIPGIGHNLQEHSVVLIRGGRVKDLPGVRYHIVRGALDTSGVDGRMQGRSLYGAKKPKEKK</sequence>
<gene>
    <name evidence="2" type="primary">rpsL</name>
    <name type="ordered locus">MCCL_1864</name>
</gene>
<keyword id="KW-0488">Methylation</keyword>
<keyword id="KW-1185">Reference proteome</keyword>
<keyword id="KW-0687">Ribonucleoprotein</keyword>
<keyword id="KW-0689">Ribosomal protein</keyword>
<keyword id="KW-0694">RNA-binding</keyword>
<keyword id="KW-0699">rRNA-binding</keyword>
<keyword id="KW-0820">tRNA-binding</keyword>
<organism>
    <name type="scientific">Macrococcus caseolyticus (strain JCSC5402)</name>
    <name type="common">Macrococcoides caseolyticum</name>
    <dbReference type="NCBI Taxonomy" id="458233"/>
    <lineage>
        <taxon>Bacteria</taxon>
        <taxon>Bacillati</taxon>
        <taxon>Bacillota</taxon>
        <taxon>Bacilli</taxon>
        <taxon>Bacillales</taxon>
        <taxon>Staphylococcaceae</taxon>
        <taxon>Macrococcoides</taxon>
    </lineage>
</organism>
<evidence type="ECO:0000250" key="1"/>
<evidence type="ECO:0000255" key="2">
    <source>
        <dbReference type="HAMAP-Rule" id="MF_00403"/>
    </source>
</evidence>
<evidence type="ECO:0000256" key="3">
    <source>
        <dbReference type="SAM" id="MobiDB-lite"/>
    </source>
</evidence>
<evidence type="ECO:0000305" key="4"/>
<proteinExistence type="inferred from homology"/>
<dbReference type="EMBL" id="AP009484">
    <property type="protein sequence ID" value="BAH18571.1"/>
    <property type="molecule type" value="Genomic_DNA"/>
</dbReference>
<dbReference type="RefSeq" id="WP_015912363.1">
    <property type="nucleotide sequence ID" value="NC_011999.1"/>
</dbReference>
<dbReference type="SMR" id="B9E8Q3"/>
<dbReference type="STRING" id="458233.MCCL_1864"/>
<dbReference type="GeneID" id="35296480"/>
<dbReference type="GeneID" id="61130249"/>
<dbReference type="KEGG" id="mcl:MCCL_1864"/>
<dbReference type="eggNOG" id="COG0048">
    <property type="taxonomic scope" value="Bacteria"/>
</dbReference>
<dbReference type="HOGENOM" id="CLU_104295_1_2_9"/>
<dbReference type="OrthoDB" id="9802366at2"/>
<dbReference type="Proteomes" id="UP000001383">
    <property type="component" value="Chromosome"/>
</dbReference>
<dbReference type="GO" id="GO:0015935">
    <property type="term" value="C:small ribosomal subunit"/>
    <property type="evidence" value="ECO:0007669"/>
    <property type="project" value="InterPro"/>
</dbReference>
<dbReference type="GO" id="GO:0019843">
    <property type="term" value="F:rRNA binding"/>
    <property type="evidence" value="ECO:0007669"/>
    <property type="project" value="UniProtKB-UniRule"/>
</dbReference>
<dbReference type="GO" id="GO:0003735">
    <property type="term" value="F:structural constituent of ribosome"/>
    <property type="evidence" value="ECO:0007669"/>
    <property type="project" value="InterPro"/>
</dbReference>
<dbReference type="GO" id="GO:0000049">
    <property type="term" value="F:tRNA binding"/>
    <property type="evidence" value="ECO:0007669"/>
    <property type="project" value="UniProtKB-UniRule"/>
</dbReference>
<dbReference type="GO" id="GO:0006412">
    <property type="term" value="P:translation"/>
    <property type="evidence" value="ECO:0007669"/>
    <property type="project" value="UniProtKB-UniRule"/>
</dbReference>
<dbReference type="CDD" id="cd03368">
    <property type="entry name" value="Ribosomal_S12"/>
    <property type="match status" value="1"/>
</dbReference>
<dbReference type="FunFam" id="2.40.50.140:FF:000001">
    <property type="entry name" value="30S ribosomal protein S12"/>
    <property type="match status" value="1"/>
</dbReference>
<dbReference type="Gene3D" id="2.40.50.140">
    <property type="entry name" value="Nucleic acid-binding proteins"/>
    <property type="match status" value="1"/>
</dbReference>
<dbReference type="HAMAP" id="MF_00403_B">
    <property type="entry name" value="Ribosomal_uS12_B"/>
    <property type="match status" value="1"/>
</dbReference>
<dbReference type="InterPro" id="IPR012340">
    <property type="entry name" value="NA-bd_OB-fold"/>
</dbReference>
<dbReference type="InterPro" id="IPR006032">
    <property type="entry name" value="Ribosomal_uS12"/>
</dbReference>
<dbReference type="InterPro" id="IPR005679">
    <property type="entry name" value="Ribosomal_uS12_bac"/>
</dbReference>
<dbReference type="NCBIfam" id="TIGR00981">
    <property type="entry name" value="rpsL_bact"/>
    <property type="match status" value="1"/>
</dbReference>
<dbReference type="PANTHER" id="PTHR11652">
    <property type="entry name" value="30S RIBOSOMAL PROTEIN S12 FAMILY MEMBER"/>
    <property type="match status" value="1"/>
</dbReference>
<dbReference type="Pfam" id="PF00164">
    <property type="entry name" value="Ribosom_S12_S23"/>
    <property type="match status" value="1"/>
</dbReference>
<dbReference type="PRINTS" id="PR01034">
    <property type="entry name" value="RIBOSOMALS12"/>
</dbReference>
<dbReference type="SUPFAM" id="SSF50249">
    <property type="entry name" value="Nucleic acid-binding proteins"/>
    <property type="match status" value="1"/>
</dbReference>
<dbReference type="PROSITE" id="PS00055">
    <property type="entry name" value="RIBOSOMAL_S12"/>
    <property type="match status" value="1"/>
</dbReference>
<protein>
    <recommendedName>
        <fullName evidence="2">Small ribosomal subunit protein uS12</fullName>
    </recommendedName>
    <alternativeName>
        <fullName evidence="4">30S ribosomal protein S12</fullName>
    </alternativeName>
</protein>
<comment type="function">
    <text evidence="2">With S4 and S5 plays an important role in translational accuracy.</text>
</comment>
<comment type="function">
    <text evidence="2">Interacts with and stabilizes bases of the 16S rRNA that are involved in tRNA selection in the A site and with the mRNA backbone. Located at the interface of the 30S and 50S subunits, it traverses the body of the 30S subunit contacting proteins on the other side and probably holding the rRNA structure together. The combined cluster of proteins S8, S12 and S17 appears to hold together the shoulder and platform of the 30S subunit.</text>
</comment>
<comment type="subunit">
    <text evidence="2">Part of the 30S ribosomal subunit. Contacts proteins S8 and S17. May interact with IF1 in the 30S initiation complex.</text>
</comment>
<comment type="similarity">
    <text evidence="2">Belongs to the universal ribosomal protein uS12 family.</text>
</comment>
<reference key="1">
    <citation type="journal article" date="2009" name="J. Bacteriol.">
        <title>Complete genome sequence of Macrococcus caseolyticus strain JCSCS5402, reflecting the ancestral genome of the human-pathogenic staphylococci.</title>
        <authorList>
            <person name="Baba T."/>
            <person name="Kuwahara-Arai K."/>
            <person name="Uchiyama I."/>
            <person name="Takeuchi F."/>
            <person name="Ito T."/>
            <person name="Hiramatsu K."/>
        </authorList>
    </citation>
    <scope>NUCLEOTIDE SEQUENCE [LARGE SCALE GENOMIC DNA]</scope>
    <source>
        <strain>JCSC5402</strain>
    </source>
</reference>
<name>RS12_MACCJ</name>
<accession>B9E8Q3</accession>
<feature type="chain" id="PRO_1000134641" description="Small ribosomal subunit protein uS12">
    <location>
        <begin position="1"/>
        <end position="139"/>
    </location>
</feature>
<feature type="region of interest" description="Disordered" evidence="3">
    <location>
        <begin position="1"/>
        <end position="44"/>
    </location>
</feature>
<feature type="compositionally biased region" description="Basic residues" evidence="3">
    <location>
        <begin position="9"/>
        <end position="18"/>
    </location>
</feature>
<feature type="modified residue" description="3-methylthioaspartic acid" evidence="1">
    <location>
        <position position="102"/>
    </location>
</feature>